<keyword id="KW-0010">Activator</keyword>
<keyword id="KW-0238">DNA-binding</keyword>
<keyword id="KW-0371">Homeobox</keyword>
<keyword id="KW-0539">Nucleus</keyword>
<keyword id="KW-1185">Reference proteome</keyword>
<keyword id="KW-0804">Transcription</keyword>
<keyword id="KW-0805">Transcription regulation</keyword>
<dbReference type="EMBL" id="BC071048">
    <property type="protein sequence ID" value="AAH71048.1"/>
    <property type="molecule type" value="mRNA"/>
</dbReference>
<dbReference type="RefSeq" id="NP_001085013.1">
    <property type="nucleotide sequence ID" value="NM_001091544.1"/>
</dbReference>
<dbReference type="SMR" id="Q6IR52"/>
<dbReference type="DNASU" id="432077"/>
<dbReference type="AGR" id="Xenbase:XB-GENE-865111"/>
<dbReference type="Xenbase" id="XB-GENE-865111">
    <property type="gene designation" value="pbx2.L"/>
</dbReference>
<dbReference type="OrthoDB" id="4187154at2759"/>
<dbReference type="Proteomes" id="UP000186698">
    <property type="component" value="Unplaced"/>
</dbReference>
<dbReference type="Bgee" id="432077">
    <property type="expression patterns" value="Expressed in neurula embryo and 19 other cell types or tissues"/>
</dbReference>
<dbReference type="GO" id="GO:0005634">
    <property type="term" value="C:nucleus"/>
    <property type="evidence" value="ECO:0000250"/>
    <property type="project" value="UniProtKB"/>
</dbReference>
<dbReference type="GO" id="GO:0005667">
    <property type="term" value="C:transcription regulator complex"/>
    <property type="evidence" value="ECO:0000250"/>
    <property type="project" value="UniProtKB"/>
</dbReference>
<dbReference type="GO" id="GO:0003682">
    <property type="term" value="F:chromatin binding"/>
    <property type="evidence" value="ECO:0000250"/>
    <property type="project" value="UniProtKB"/>
</dbReference>
<dbReference type="GO" id="GO:0003677">
    <property type="term" value="F:DNA binding"/>
    <property type="evidence" value="ECO:0007669"/>
    <property type="project" value="UniProtKB-KW"/>
</dbReference>
<dbReference type="GO" id="GO:0000981">
    <property type="term" value="F:DNA-binding transcription factor activity, RNA polymerase II-specific"/>
    <property type="evidence" value="ECO:0007669"/>
    <property type="project" value="InterPro"/>
</dbReference>
<dbReference type="GO" id="GO:0009887">
    <property type="term" value="P:animal organ morphogenesis"/>
    <property type="evidence" value="ECO:0000318"/>
    <property type="project" value="GO_Central"/>
</dbReference>
<dbReference type="GO" id="GO:0007420">
    <property type="term" value="P:brain development"/>
    <property type="evidence" value="ECO:0000318"/>
    <property type="project" value="GO_Central"/>
</dbReference>
<dbReference type="GO" id="GO:0048568">
    <property type="term" value="P:embryonic organ development"/>
    <property type="evidence" value="ECO:0000318"/>
    <property type="project" value="GO_Central"/>
</dbReference>
<dbReference type="GO" id="GO:0001654">
    <property type="term" value="P:eye development"/>
    <property type="evidence" value="ECO:0000318"/>
    <property type="project" value="GO_Central"/>
</dbReference>
<dbReference type="GO" id="GO:0048666">
    <property type="term" value="P:neuron development"/>
    <property type="evidence" value="ECO:0000318"/>
    <property type="project" value="GO_Central"/>
</dbReference>
<dbReference type="GO" id="GO:0045944">
    <property type="term" value="P:positive regulation of transcription by RNA polymerase II"/>
    <property type="evidence" value="ECO:0000250"/>
    <property type="project" value="UniProtKB"/>
</dbReference>
<dbReference type="CDD" id="cd00086">
    <property type="entry name" value="homeodomain"/>
    <property type="match status" value="1"/>
</dbReference>
<dbReference type="FunFam" id="1.10.10.60:FF:000008">
    <property type="entry name" value="Pre-B-cell leukemia transcription factor 1"/>
    <property type="match status" value="1"/>
</dbReference>
<dbReference type="Gene3D" id="1.10.10.60">
    <property type="entry name" value="Homeodomain-like"/>
    <property type="match status" value="1"/>
</dbReference>
<dbReference type="InterPro" id="IPR001356">
    <property type="entry name" value="HD"/>
</dbReference>
<dbReference type="InterPro" id="IPR017970">
    <property type="entry name" value="Homeobox_CS"/>
</dbReference>
<dbReference type="InterPro" id="IPR009057">
    <property type="entry name" value="Homeodomain-like_sf"/>
</dbReference>
<dbReference type="InterPro" id="IPR008422">
    <property type="entry name" value="KN_HD"/>
</dbReference>
<dbReference type="InterPro" id="IPR005542">
    <property type="entry name" value="PBX_PBC_dom"/>
</dbReference>
<dbReference type="InterPro" id="IPR050224">
    <property type="entry name" value="TALE_homeobox"/>
</dbReference>
<dbReference type="PANTHER" id="PTHR11850">
    <property type="entry name" value="HOMEOBOX PROTEIN TRANSCRIPTION FACTORS"/>
    <property type="match status" value="1"/>
</dbReference>
<dbReference type="Pfam" id="PF05920">
    <property type="entry name" value="Homeobox_KN"/>
    <property type="match status" value="1"/>
</dbReference>
<dbReference type="Pfam" id="PF03792">
    <property type="entry name" value="PBC"/>
    <property type="match status" value="1"/>
</dbReference>
<dbReference type="SMART" id="SM00389">
    <property type="entry name" value="HOX"/>
    <property type="match status" value="1"/>
</dbReference>
<dbReference type="SUPFAM" id="SSF46689">
    <property type="entry name" value="Homeodomain-like"/>
    <property type="match status" value="1"/>
</dbReference>
<dbReference type="PROSITE" id="PS00027">
    <property type="entry name" value="HOMEOBOX_1"/>
    <property type="match status" value="1"/>
</dbReference>
<dbReference type="PROSITE" id="PS50071">
    <property type="entry name" value="HOMEOBOX_2"/>
    <property type="match status" value="1"/>
</dbReference>
<dbReference type="PROSITE" id="PS51978">
    <property type="entry name" value="PBC"/>
    <property type="match status" value="1"/>
</dbReference>
<accession>Q6IR52</accession>
<reference evidence="6" key="1">
    <citation type="submission" date="2004-05" db="EMBL/GenBank/DDBJ databases">
        <authorList>
            <consortium name="NIH - Xenopus Gene Collection (XGC) project"/>
        </authorList>
    </citation>
    <scope>NUCLEOTIDE SEQUENCE [LARGE SCALE MRNA]</scope>
    <source>
        <tissue evidence="6">Oocyte</tissue>
    </source>
</reference>
<protein>
    <recommendedName>
        <fullName evidence="1">Pre-B-cell leukemia transcription factor 2</fullName>
    </recommendedName>
    <alternativeName>
        <fullName evidence="1">Homeobox protein pbx2</fullName>
    </alternativeName>
</protein>
<comment type="function">
    <text evidence="1">Transcriptional activator that binds the sequence 5'-ATCAATCAA-3'.</text>
</comment>
<comment type="subcellular location">
    <subcellularLocation>
        <location evidence="1 3">Nucleus</location>
    </subcellularLocation>
</comment>
<comment type="similarity">
    <text evidence="2">Belongs to the TALE/PBX homeobox family.</text>
</comment>
<gene>
    <name type="primary">pbx2</name>
</gene>
<feature type="chain" id="PRO_0000365108" description="Pre-B-cell leukemia transcription factor 2">
    <location>
        <begin position="1"/>
        <end position="445"/>
    </location>
</feature>
<feature type="domain" description="PBC" evidence="4">
    <location>
        <begin position="42"/>
        <end position="236"/>
    </location>
</feature>
<feature type="DNA-binding region" description="Homeobox; TALE-type" evidence="3">
    <location>
        <begin position="237"/>
        <end position="299"/>
    </location>
</feature>
<feature type="region of interest" description="Disordered" evidence="5">
    <location>
        <begin position="13"/>
        <end position="44"/>
    </location>
</feature>
<feature type="region of interest" description="PBC-A" evidence="4">
    <location>
        <begin position="49"/>
        <end position="128"/>
    </location>
</feature>
<feature type="region of interest" description="PBC-B" evidence="4">
    <location>
        <begin position="131"/>
        <end position="236"/>
    </location>
</feature>
<feature type="region of interest" description="Disordered" evidence="5">
    <location>
        <begin position="319"/>
        <end position="338"/>
    </location>
</feature>
<feature type="compositionally biased region" description="Basic and acidic residues" evidence="5">
    <location>
        <begin position="31"/>
        <end position="44"/>
    </location>
</feature>
<feature type="compositionally biased region" description="Polar residues" evidence="5">
    <location>
        <begin position="319"/>
        <end position="332"/>
    </location>
</feature>
<organism>
    <name type="scientific">Xenopus laevis</name>
    <name type="common">African clawed frog</name>
    <dbReference type="NCBI Taxonomy" id="8355"/>
    <lineage>
        <taxon>Eukaryota</taxon>
        <taxon>Metazoa</taxon>
        <taxon>Chordata</taxon>
        <taxon>Craniata</taxon>
        <taxon>Vertebrata</taxon>
        <taxon>Euteleostomi</taxon>
        <taxon>Amphibia</taxon>
        <taxon>Batrachia</taxon>
        <taxon>Anura</taxon>
        <taxon>Pipoidea</taxon>
        <taxon>Pipidae</taxon>
        <taxon>Xenopodinae</taxon>
        <taxon>Xenopus</taxon>
        <taxon>Xenopus</taxon>
    </lineage>
</organism>
<evidence type="ECO:0000250" key="1">
    <source>
        <dbReference type="UniProtKB" id="P40425"/>
    </source>
</evidence>
<evidence type="ECO:0000255" key="2"/>
<evidence type="ECO:0000255" key="3">
    <source>
        <dbReference type="PROSITE-ProRule" id="PRU00108"/>
    </source>
</evidence>
<evidence type="ECO:0000255" key="4">
    <source>
        <dbReference type="PROSITE-ProRule" id="PRU01322"/>
    </source>
</evidence>
<evidence type="ECO:0000256" key="5">
    <source>
        <dbReference type="SAM" id="MobiDB-lite"/>
    </source>
</evidence>
<evidence type="ECO:0000312" key="6">
    <source>
        <dbReference type="EMBL" id="AAH71048.1"/>
    </source>
</evidence>
<proteinExistence type="evidence at transcript level"/>
<name>PBX2_XENLA</name>
<sequence length="445" mass="49403">MDEQGRLMQARGVGIPGLPIHGGPQTLTPHPMHEPPTDNGEPRKQDIGDILQQIMTITDQSLDEAQAKKHALNCHRMKPALFSVLCEIKEKTGLSIRNSQEEEPVDPQLMRLDNMLLAEGVAGPEKGGGSAAAAAAAAASGGVSPDNSIEHSDYRNKLSQIRQIYHAELEKYEQACNEFTTHVMNLLREQSRTRPISPKEIERMVGIIHRKFSSIQMQLKQSTCEAVMILRSRFLDARRKRRNFSKQATEVLNEYFYSHLSNPYPSEEAKEELAKKCSITVSQVSNWFGNKRIRYKKNIGKFQEEANIYAVKTAVSVTQGGHSGANSPTTPTSAGSGGSFNLSGSNDMFMAMQGFRCTARGRSGQMEGGKKLSPLRLSPRPQKDLAVSTLTPRTELFILCAPSVYQTRLFTWTKPLPRLTPILWNYQGEGLWKSTLPLPPSLPSN</sequence>